<sequence>MSTEQELQIGKVVKSHGIRGEVVVELSTDDPDIRFAIGEVLNGKQAGKEHSLTIDAARMHQGRLLVKFAEVPDRTAADSLRGTRFFAAPLEDEDDEDGFYDHELESLRVIHEGEDIGEVTGVMHGPAGEILEVRLTSGKETLIPFVHAIVPEVDLEEGTATITPPEGLLDL</sequence>
<keyword id="KW-0143">Chaperone</keyword>
<keyword id="KW-0963">Cytoplasm</keyword>
<keyword id="KW-0690">Ribosome biogenesis</keyword>
<keyword id="KW-0698">rRNA processing</keyword>
<feature type="chain" id="PRO_1000001167" description="Ribosome maturation factor RimM">
    <location>
        <begin position="1"/>
        <end position="171"/>
    </location>
</feature>
<feature type="domain" description="PRC barrel" evidence="1">
    <location>
        <begin position="96"/>
        <end position="168"/>
    </location>
</feature>
<protein>
    <recommendedName>
        <fullName evidence="1">Ribosome maturation factor RimM</fullName>
    </recommendedName>
</protein>
<reference key="1">
    <citation type="journal article" date="2007" name="Microbiology">
        <title>Comparative analysis of the Corynebacterium glutamicum group and complete genome sequence of strain R.</title>
        <authorList>
            <person name="Yukawa H."/>
            <person name="Omumasaba C.A."/>
            <person name="Nonaka H."/>
            <person name="Kos P."/>
            <person name="Okai N."/>
            <person name="Suzuki N."/>
            <person name="Suda M."/>
            <person name="Tsuge Y."/>
            <person name="Watanabe J."/>
            <person name="Ikeda Y."/>
            <person name="Vertes A.A."/>
            <person name="Inui M."/>
        </authorList>
    </citation>
    <scope>NUCLEOTIDE SEQUENCE [LARGE SCALE GENOMIC DNA]</scope>
    <source>
        <strain>R</strain>
    </source>
</reference>
<dbReference type="EMBL" id="AP009044">
    <property type="protein sequence ID" value="BAF54935.1"/>
    <property type="molecule type" value="Genomic_DNA"/>
</dbReference>
<dbReference type="RefSeq" id="WP_003856339.1">
    <property type="nucleotide sequence ID" value="NC_009342.1"/>
</dbReference>
<dbReference type="SMR" id="A4QFB9"/>
<dbReference type="KEGG" id="cgt:cgR_1939"/>
<dbReference type="HOGENOM" id="CLU_077636_0_0_11"/>
<dbReference type="PhylomeDB" id="A4QFB9"/>
<dbReference type="Proteomes" id="UP000006698">
    <property type="component" value="Chromosome"/>
</dbReference>
<dbReference type="GO" id="GO:0005737">
    <property type="term" value="C:cytoplasm"/>
    <property type="evidence" value="ECO:0007669"/>
    <property type="project" value="UniProtKB-SubCell"/>
</dbReference>
<dbReference type="GO" id="GO:0005840">
    <property type="term" value="C:ribosome"/>
    <property type="evidence" value="ECO:0007669"/>
    <property type="project" value="InterPro"/>
</dbReference>
<dbReference type="GO" id="GO:0043022">
    <property type="term" value="F:ribosome binding"/>
    <property type="evidence" value="ECO:0007669"/>
    <property type="project" value="InterPro"/>
</dbReference>
<dbReference type="GO" id="GO:0042274">
    <property type="term" value="P:ribosomal small subunit biogenesis"/>
    <property type="evidence" value="ECO:0007669"/>
    <property type="project" value="UniProtKB-UniRule"/>
</dbReference>
<dbReference type="GO" id="GO:0006364">
    <property type="term" value="P:rRNA processing"/>
    <property type="evidence" value="ECO:0007669"/>
    <property type="project" value="UniProtKB-UniRule"/>
</dbReference>
<dbReference type="Gene3D" id="2.30.30.240">
    <property type="entry name" value="PRC-barrel domain"/>
    <property type="match status" value="1"/>
</dbReference>
<dbReference type="Gene3D" id="2.40.30.60">
    <property type="entry name" value="RimM"/>
    <property type="match status" value="1"/>
</dbReference>
<dbReference type="HAMAP" id="MF_00014">
    <property type="entry name" value="Ribosome_mat_RimM"/>
    <property type="match status" value="1"/>
</dbReference>
<dbReference type="InterPro" id="IPR011033">
    <property type="entry name" value="PRC_barrel-like_sf"/>
</dbReference>
<dbReference type="InterPro" id="IPR056792">
    <property type="entry name" value="PRC_RimM"/>
</dbReference>
<dbReference type="InterPro" id="IPR011961">
    <property type="entry name" value="RimM"/>
</dbReference>
<dbReference type="InterPro" id="IPR002676">
    <property type="entry name" value="RimM_N"/>
</dbReference>
<dbReference type="InterPro" id="IPR036976">
    <property type="entry name" value="RimM_N_sf"/>
</dbReference>
<dbReference type="InterPro" id="IPR009000">
    <property type="entry name" value="Transl_B-barrel_sf"/>
</dbReference>
<dbReference type="NCBIfam" id="TIGR02273">
    <property type="entry name" value="16S_RimM"/>
    <property type="match status" value="1"/>
</dbReference>
<dbReference type="PANTHER" id="PTHR33692">
    <property type="entry name" value="RIBOSOME MATURATION FACTOR RIMM"/>
    <property type="match status" value="1"/>
</dbReference>
<dbReference type="PANTHER" id="PTHR33692:SF1">
    <property type="entry name" value="RIBOSOME MATURATION FACTOR RIMM"/>
    <property type="match status" value="1"/>
</dbReference>
<dbReference type="Pfam" id="PF24986">
    <property type="entry name" value="PRC_RimM"/>
    <property type="match status" value="1"/>
</dbReference>
<dbReference type="Pfam" id="PF01782">
    <property type="entry name" value="RimM"/>
    <property type="match status" value="1"/>
</dbReference>
<dbReference type="SUPFAM" id="SSF50346">
    <property type="entry name" value="PRC-barrel domain"/>
    <property type="match status" value="1"/>
</dbReference>
<dbReference type="SUPFAM" id="SSF50447">
    <property type="entry name" value="Translation proteins"/>
    <property type="match status" value="1"/>
</dbReference>
<proteinExistence type="inferred from homology"/>
<gene>
    <name evidence="1" type="primary">rimM</name>
    <name type="ordered locus">cgR_1939</name>
</gene>
<accession>A4QFB9</accession>
<name>RIMM_CORGB</name>
<organism>
    <name type="scientific">Corynebacterium glutamicum (strain R)</name>
    <dbReference type="NCBI Taxonomy" id="340322"/>
    <lineage>
        <taxon>Bacteria</taxon>
        <taxon>Bacillati</taxon>
        <taxon>Actinomycetota</taxon>
        <taxon>Actinomycetes</taxon>
        <taxon>Mycobacteriales</taxon>
        <taxon>Corynebacteriaceae</taxon>
        <taxon>Corynebacterium</taxon>
    </lineage>
</organism>
<comment type="function">
    <text evidence="1">An accessory protein needed during the final step in the assembly of 30S ribosomal subunit, possibly for assembly of the head region. Essential for efficient processing of 16S rRNA. May be needed both before and after RbfA during the maturation of 16S rRNA. It has affinity for free ribosomal 30S subunits but not for 70S ribosomes.</text>
</comment>
<comment type="subunit">
    <text evidence="1">Binds ribosomal protein uS19.</text>
</comment>
<comment type="subcellular location">
    <subcellularLocation>
        <location evidence="1">Cytoplasm</location>
    </subcellularLocation>
</comment>
<comment type="domain">
    <text evidence="1">The PRC barrel domain binds ribosomal protein uS19.</text>
</comment>
<comment type="similarity">
    <text evidence="1">Belongs to the RimM family.</text>
</comment>
<evidence type="ECO:0000255" key="1">
    <source>
        <dbReference type="HAMAP-Rule" id="MF_00014"/>
    </source>
</evidence>